<comment type="function">
    <text>Antagonist of L-type calcium channels (Cav1/CACNA1). Causes paralysis in the posterior limbs and gradual decreases in movement and aggression during 24 hours at dose levels of 5 ug per mouse.</text>
</comment>
<comment type="subcellular location">
    <subcellularLocation>
        <location evidence="3">Secreted</location>
    </subcellularLocation>
</comment>
<comment type="tissue specificity">
    <text evidence="3">Expressed by the venom gland.</text>
</comment>
<comment type="domain">
    <text evidence="1">The presence of a 'disulfide through disulfide knot' structurally defines this protein as a knottin.</text>
</comment>
<comment type="mass spectrometry"/>
<comment type="similarity">
    <text evidence="4">Belongs to the neurotoxin 02 (plectoxin) family.</text>
</comment>
<accession>P81791</accession>
<dbReference type="PIR" id="E44336">
    <property type="entry name" value="E44336"/>
</dbReference>
<dbReference type="SMR" id="P81791"/>
<dbReference type="ArachnoServer" id="AS000265">
    <property type="toxin name" value="U7-ctenitoxin-Pn1a"/>
</dbReference>
<dbReference type="GO" id="GO:0005576">
    <property type="term" value="C:extracellular region"/>
    <property type="evidence" value="ECO:0007669"/>
    <property type="project" value="UniProtKB-SubCell"/>
</dbReference>
<dbReference type="GO" id="GO:0005246">
    <property type="term" value="F:calcium channel regulator activity"/>
    <property type="evidence" value="ECO:0007669"/>
    <property type="project" value="UniProtKB-KW"/>
</dbReference>
<dbReference type="GO" id="GO:0090729">
    <property type="term" value="F:toxin activity"/>
    <property type="evidence" value="ECO:0007669"/>
    <property type="project" value="UniProtKB-KW"/>
</dbReference>
<dbReference type="InterPro" id="IPR019553">
    <property type="entry name" value="Spider_toxin_CSTX_knottin"/>
</dbReference>
<dbReference type="Pfam" id="PF10530">
    <property type="entry name" value="Toxin_35"/>
    <property type="match status" value="1"/>
</dbReference>
<keyword id="KW-0108">Calcium channel impairing toxin</keyword>
<keyword id="KW-0903">Direct protein sequencing</keyword>
<keyword id="KW-1015">Disulfide bond</keyword>
<keyword id="KW-0872">Ion channel impairing toxin</keyword>
<keyword id="KW-0960">Knottin</keyword>
<keyword id="KW-0528">Neurotoxin</keyword>
<keyword id="KW-0964">Secreted</keyword>
<keyword id="KW-0732">Signal</keyword>
<keyword id="KW-0800">Toxin</keyword>
<keyword id="KW-1218">Voltage-gated calcium channel impairing toxin</keyword>
<feature type="signal peptide" evidence="2">
    <location>
        <begin position="1"/>
        <end position="17"/>
    </location>
</feature>
<feature type="propeptide" id="PRO_0000285664">
    <location>
        <begin position="18"/>
        <end position="38"/>
    </location>
</feature>
<feature type="chain" id="PRO_0000087640" description="U7-ctenitoxin-Pn1a">
    <location>
        <begin position="40"/>
        <end position="84"/>
    </location>
</feature>
<feature type="disulfide bond" evidence="1">
    <location>
        <begin position="41"/>
        <end position="56"/>
    </location>
</feature>
<feature type="disulfide bond" evidence="1">
    <location>
        <begin position="48"/>
        <end position="61"/>
    </location>
</feature>
<feature type="disulfide bond" evidence="1">
    <location>
        <begin position="55"/>
        <end position="78"/>
    </location>
</feature>
<feature type="disulfide bond" evidence="1">
    <location>
        <begin position="63"/>
        <end position="76"/>
    </location>
</feature>
<proteinExistence type="evidence at protein level"/>
<sequence>MKLCILLVVLLITVVRAEEDILENEAEDISPAIKERSARGCIGRNESCKFDRHGCCWPWSCSCWNKEGQPESDVWCECSLKIGK</sequence>
<reference key="1">
    <citation type="journal article" date="2003" name="Toxicon">
        <title>Molecular cloning and characterization of Phoneutria nigriventer toxins active on calcium channels.</title>
        <authorList>
            <person name="Cardoso F.C."/>
            <person name="Pacifico L.G."/>
            <person name="Carvalho D.C."/>
            <person name="Victoria J.M.N."/>
            <person name="Neves A.L.G."/>
            <person name="Chavez-Olortegui C."/>
            <person name="Gomez M.V."/>
            <person name="Kalapothakis E."/>
        </authorList>
    </citation>
    <scope>NUCLEOTIDE SEQUENCE [MRNA]</scope>
    <source>
        <tissue>Venom gland</tissue>
    </source>
</reference>
<reference key="2">
    <citation type="journal article" date="2006" name="Comp. Biochem. Physiol.">
        <title>Comparison of the partial proteomes of the venoms of Brazilian spiders of the genus Phoneutria.</title>
        <authorList>
            <person name="Richardson M."/>
            <person name="Pimenta A.M."/>
            <person name="Bemquerer M.P."/>
            <person name="Santoro M.M."/>
            <person name="Beirao P.S."/>
            <person name="Lima M.E."/>
            <person name="Figueiredo S.G."/>
            <person name="Bloch C. Jr."/>
            <person name="Vasconcelos E.A."/>
            <person name="Campos F.A."/>
            <person name="Gomes P.C."/>
            <person name="Cordeiro M.N."/>
        </authorList>
    </citation>
    <scope>PROTEIN SEQUENCE OF 40-84</scope>
    <scope>SUBCELLULAR LOCATION</scope>
    <scope>TISSUE SPECIFICITY</scope>
    <scope>MASS SPECTROMETRY</scope>
    <source>
        <tissue>Venom</tissue>
    </source>
</reference>
<reference key="3">
    <citation type="journal article" date="1993" name="Toxicon">
        <title>Purification and amino acid sequences of six Tx3 type neurotoxins from the venom of the Brazilian 'armed' spider Phoneutria nigriventer (Keys).</title>
        <authorList>
            <person name="Cordeiro M.N."/>
            <person name="De Figueiredo S.G."/>
            <person name="Valentim A.D.C."/>
            <person name="Diniz C.R."/>
            <person name="von Eickstedt V.R.D."/>
            <person name="Gilroy J."/>
            <person name="Richardson M."/>
        </authorList>
    </citation>
    <scope>PROTEIN SEQUENCE OF 40-75</scope>
    <source>
        <tissue>Venom</tissue>
    </source>
</reference>
<name>TX20C_PHONI</name>
<protein>
    <recommendedName>
        <fullName>U7-ctenitoxin-Pn1a</fullName>
        <shortName>U7-CNTX-Pn1a</shortName>
    </recommendedName>
    <alternativeName>
        <fullName>Neurotoxin Tx3-5</fullName>
    </alternativeName>
    <alternativeName>
        <fullName>PnTx3-5</fullName>
    </alternativeName>
</protein>
<organism>
    <name type="scientific">Phoneutria nigriventer</name>
    <name type="common">Brazilian armed spider</name>
    <name type="synonym">Ctenus nigriventer</name>
    <dbReference type="NCBI Taxonomy" id="6918"/>
    <lineage>
        <taxon>Eukaryota</taxon>
        <taxon>Metazoa</taxon>
        <taxon>Ecdysozoa</taxon>
        <taxon>Arthropoda</taxon>
        <taxon>Chelicerata</taxon>
        <taxon>Arachnida</taxon>
        <taxon>Araneae</taxon>
        <taxon>Araneomorphae</taxon>
        <taxon>Entelegynae</taxon>
        <taxon>Lycosoidea</taxon>
        <taxon>Ctenidae</taxon>
        <taxon>Phoneutria</taxon>
    </lineage>
</organism>
<evidence type="ECO:0000250" key="1"/>
<evidence type="ECO:0000255" key="2"/>
<evidence type="ECO:0000269" key="3">
    <source>
    </source>
</evidence>
<evidence type="ECO:0000305" key="4"/>